<keyword id="KW-0103">Bromodomain</keyword>
<keyword id="KW-0158">Chromosome</keyword>
<keyword id="KW-0479">Metal-binding</keyword>
<keyword id="KW-0539">Nucleus</keyword>
<keyword id="KW-1185">Reference proteome</keyword>
<keyword id="KW-0804">Transcription</keyword>
<keyword id="KW-0805">Transcription regulation</keyword>
<keyword id="KW-0862">Zinc</keyword>
<keyword id="KW-0863">Zinc-finger</keyword>
<reference evidence="8" key="1">
    <citation type="journal article" date="1998" name="Science">
        <title>Genome sequence of the nematode C. elegans: a platform for investigating biology.</title>
        <authorList>
            <consortium name="The C. elegans sequencing consortium"/>
        </authorList>
    </citation>
    <scope>NUCLEOTIDE SEQUENCE [LARGE SCALE GENOMIC DNA]</scope>
    <source>
        <strain evidence="8">Bristol N2</strain>
    </source>
</reference>
<reference evidence="7" key="2">
    <citation type="journal article" date="2020" name="Nature">
        <title>Two conserved epigenetic regulators prevent healthy ageing.</title>
        <authorList>
            <person name="Yuan J."/>
            <person name="Chang S.Y."/>
            <person name="Yin S.G."/>
            <person name="Liu Z.Y."/>
            <person name="Cheng X."/>
            <person name="Liu X.J."/>
            <person name="Jiang Q."/>
            <person name="Gao G."/>
            <person name="Lin D.Y."/>
            <person name="Kang X.L."/>
            <person name="Ye S.W."/>
            <person name="Chen Z."/>
            <person name="Yin J.A."/>
            <person name="Hao P."/>
            <person name="Jiang L."/>
            <person name="Cai S.Q."/>
        </authorList>
    </citation>
    <scope>FUNCTION</scope>
    <scope>INTERACTION WITH SET-6</scope>
    <scope>SUBCELLULAR LOCATION</scope>
    <scope>TISSUE SPECIFICITY</scope>
    <scope>DEVELOPMENTAL STAGE</scope>
    <scope>DISRUPTION PHENOTYPE</scope>
</reference>
<name>BAZ2_CAEEL</name>
<protein>
    <recommendedName>
        <fullName evidence="7">Bromodomain adjacent to zinc finger domain protein 2</fullName>
    </recommendedName>
</protein>
<dbReference type="EMBL" id="BX284603">
    <property type="protein sequence ID" value="CCD65251.2"/>
    <property type="molecule type" value="Genomic_DNA"/>
</dbReference>
<dbReference type="RefSeq" id="NP_498673.3">
    <property type="nucleotide sequence ID" value="NM_066272.6"/>
</dbReference>
<dbReference type="SMR" id="Q23590"/>
<dbReference type="FunCoup" id="Q23590">
    <property type="interactions" value="1392"/>
</dbReference>
<dbReference type="STRING" id="6239.ZK783.4.1"/>
<dbReference type="PaxDb" id="6239-ZK783.4"/>
<dbReference type="PeptideAtlas" id="Q23590"/>
<dbReference type="EnsemblMetazoa" id="ZK783.4.1">
    <property type="protein sequence ID" value="ZK783.4.1"/>
    <property type="gene ID" value="WBGene00001470"/>
</dbReference>
<dbReference type="GeneID" id="176078"/>
<dbReference type="KEGG" id="cel:CELE_ZK783.4"/>
<dbReference type="UCSC" id="ZK783.4">
    <property type="organism name" value="c. elegans"/>
</dbReference>
<dbReference type="AGR" id="WB:WBGene00001470"/>
<dbReference type="CTD" id="176078"/>
<dbReference type="WormBase" id="ZK783.4">
    <property type="protein sequence ID" value="CE47168"/>
    <property type="gene ID" value="WBGene00001470"/>
    <property type="gene designation" value="baz-2"/>
</dbReference>
<dbReference type="eggNOG" id="KOG1245">
    <property type="taxonomic scope" value="Eukaryota"/>
</dbReference>
<dbReference type="GeneTree" id="ENSGT00940000172329"/>
<dbReference type="HOGENOM" id="CLU_255009_0_0_1"/>
<dbReference type="InParanoid" id="Q23590"/>
<dbReference type="OMA" id="GMIMWER"/>
<dbReference type="OrthoDB" id="784962at2759"/>
<dbReference type="PhylomeDB" id="Q23590"/>
<dbReference type="PRO" id="PR:Q23590"/>
<dbReference type="Proteomes" id="UP000001940">
    <property type="component" value="Chromosome III"/>
</dbReference>
<dbReference type="Bgee" id="WBGene00001470">
    <property type="expression patterns" value="Expressed in pharyngeal muscle cell (C elegans) and 4 other cell types or tissues"/>
</dbReference>
<dbReference type="GO" id="GO:0000785">
    <property type="term" value="C:chromatin"/>
    <property type="evidence" value="ECO:0000315"/>
    <property type="project" value="UniProtKB"/>
</dbReference>
<dbReference type="GO" id="GO:0005634">
    <property type="term" value="C:nucleus"/>
    <property type="evidence" value="ECO:0007669"/>
    <property type="project" value="UniProtKB-SubCell"/>
</dbReference>
<dbReference type="GO" id="GO:0003677">
    <property type="term" value="F:DNA binding"/>
    <property type="evidence" value="ECO:0007669"/>
    <property type="project" value="InterPro"/>
</dbReference>
<dbReference type="GO" id="GO:0008270">
    <property type="term" value="F:zinc ion binding"/>
    <property type="evidence" value="ECO:0007669"/>
    <property type="project" value="UniProtKB-KW"/>
</dbReference>
<dbReference type="GO" id="GO:0040029">
    <property type="term" value="P:epigenetic regulation of gene expression"/>
    <property type="evidence" value="ECO:0000315"/>
    <property type="project" value="UniProtKB"/>
</dbReference>
<dbReference type="CDD" id="cd05503">
    <property type="entry name" value="Bromo_BAZ2A_B_like"/>
    <property type="match status" value="1"/>
</dbReference>
<dbReference type="CDD" id="cd01397">
    <property type="entry name" value="HAT_MBD"/>
    <property type="match status" value="1"/>
</dbReference>
<dbReference type="CDD" id="cd15545">
    <property type="entry name" value="PHD_BAZ2A_like"/>
    <property type="match status" value="1"/>
</dbReference>
<dbReference type="CDD" id="cd15489">
    <property type="entry name" value="PHD_SF"/>
    <property type="match status" value="1"/>
</dbReference>
<dbReference type="Gene3D" id="1.20.920.10">
    <property type="entry name" value="Bromodomain-like"/>
    <property type="match status" value="1"/>
</dbReference>
<dbReference type="Gene3D" id="3.30.890.10">
    <property type="entry name" value="Methyl-cpg-binding Protein 2, Chain A"/>
    <property type="match status" value="1"/>
</dbReference>
<dbReference type="Gene3D" id="3.30.40.10">
    <property type="entry name" value="Zinc/RING finger domain, C3HC4 (zinc finger)"/>
    <property type="match status" value="1"/>
</dbReference>
<dbReference type="InterPro" id="IPR037374">
    <property type="entry name" value="BAZ2A/B_Bromo"/>
</dbReference>
<dbReference type="InterPro" id="IPR001487">
    <property type="entry name" value="Bromodomain"/>
</dbReference>
<dbReference type="InterPro" id="IPR036427">
    <property type="entry name" value="Bromodomain-like_sf"/>
</dbReference>
<dbReference type="InterPro" id="IPR018359">
    <property type="entry name" value="Bromodomain_CS"/>
</dbReference>
<dbReference type="InterPro" id="IPR018501">
    <property type="entry name" value="DDT_dom"/>
</dbReference>
<dbReference type="InterPro" id="IPR016177">
    <property type="entry name" value="DNA-bd_dom_sf"/>
</dbReference>
<dbReference type="InterPro" id="IPR001739">
    <property type="entry name" value="Methyl_CpG_DNA-bd"/>
</dbReference>
<dbReference type="InterPro" id="IPR028942">
    <property type="entry name" value="WHIM1_dom"/>
</dbReference>
<dbReference type="InterPro" id="IPR028941">
    <property type="entry name" value="WHIM2_dom"/>
</dbReference>
<dbReference type="InterPro" id="IPR011011">
    <property type="entry name" value="Znf_FYVE_PHD"/>
</dbReference>
<dbReference type="InterPro" id="IPR001965">
    <property type="entry name" value="Znf_PHD"/>
</dbReference>
<dbReference type="InterPro" id="IPR019787">
    <property type="entry name" value="Znf_PHD-finger"/>
</dbReference>
<dbReference type="InterPro" id="IPR013083">
    <property type="entry name" value="Znf_RING/FYVE/PHD"/>
</dbReference>
<dbReference type="PANTHER" id="PTHR45915:SF2">
    <property type="entry name" value="TOUTATIS, ISOFORM E"/>
    <property type="match status" value="1"/>
</dbReference>
<dbReference type="PANTHER" id="PTHR45915">
    <property type="entry name" value="TRANSCRIPTION INTERMEDIARY FACTOR"/>
    <property type="match status" value="1"/>
</dbReference>
<dbReference type="Pfam" id="PF00439">
    <property type="entry name" value="Bromodomain"/>
    <property type="match status" value="1"/>
</dbReference>
<dbReference type="Pfam" id="PF01429">
    <property type="entry name" value="MBD"/>
    <property type="match status" value="1"/>
</dbReference>
<dbReference type="Pfam" id="PF00628">
    <property type="entry name" value="PHD"/>
    <property type="match status" value="1"/>
</dbReference>
<dbReference type="Pfam" id="PF15612">
    <property type="entry name" value="WHIM1"/>
    <property type="match status" value="1"/>
</dbReference>
<dbReference type="Pfam" id="PF15613">
    <property type="entry name" value="WSD"/>
    <property type="match status" value="1"/>
</dbReference>
<dbReference type="PRINTS" id="PR00503">
    <property type="entry name" value="BROMODOMAIN"/>
</dbReference>
<dbReference type="SMART" id="SM00297">
    <property type="entry name" value="BROMO"/>
    <property type="match status" value="1"/>
</dbReference>
<dbReference type="SMART" id="SM00571">
    <property type="entry name" value="DDT"/>
    <property type="match status" value="1"/>
</dbReference>
<dbReference type="SMART" id="SM00391">
    <property type="entry name" value="MBD"/>
    <property type="match status" value="1"/>
</dbReference>
<dbReference type="SMART" id="SM00249">
    <property type="entry name" value="PHD"/>
    <property type="match status" value="2"/>
</dbReference>
<dbReference type="SUPFAM" id="SSF47370">
    <property type="entry name" value="Bromodomain"/>
    <property type="match status" value="1"/>
</dbReference>
<dbReference type="SUPFAM" id="SSF54171">
    <property type="entry name" value="DNA-binding domain"/>
    <property type="match status" value="1"/>
</dbReference>
<dbReference type="SUPFAM" id="SSF57903">
    <property type="entry name" value="FYVE/PHD zinc finger"/>
    <property type="match status" value="2"/>
</dbReference>
<dbReference type="PROSITE" id="PS00633">
    <property type="entry name" value="BROMODOMAIN_1"/>
    <property type="match status" value="1"/>
</dbReference>
<dbReference type="PROSITE" id="PS50014">
    <property type="entry name" value="BROMODOMAIN_2"/>
    <property type="match status" value="1"/>
</dbReference>
<dbReference type="PROSITE" id="PS50827">
    <property type="entry name" value="DDT"/>
    <property type="match status" value="1"/>
</dbReference>
<dbReference type="PROSITE" id="PS50982">
    <property type="entry name" value="MBD"/>
    <property type="match status" value="1"/>
</dbReference>
<dbReference type="PROSITE" id="PS50016">
    <property type="entry name" value="ZF_PHD_2"/>
    <property type="match status" value="1"/>
</dbReference>
<proteinExistence type="evidence at protein level"/>
<comment type="function">
    <text evidence="6">Chromatin reader protein, involved in positively modulating the rate of age-related behavioral deterioration (PubMed:32103178). Positively modulates the level of global trimethylated 'Lys-9' of histone H3 (H3K9me3), but not of H3K9me2 or H3K9me1 (PubMed:32103178). May repress the expression of mitochondrial function-related genes by occupying their promoter regions, working in concert with histone methyltransferase, set-6 (PubMed:32103178). Involved in modulation of the mitochondrial unfolded protein response (UPR) (PubMed:32103178). Negatively regulates expression of bas-1, a serotonin (5-HT) and dopamine synthesizing enzyme (DOPA decarboxylase), with aging (PubMed:32103178). Negatively modulates levels of endogenous 5-HT and dopamine with aging (PubMed:32103178). Involved in modulating longevity, probably as a result of enhanced stress resistance via mechanisms related to dietary restriction and mitochondrial function (PubMed:32103178).</text>
</comment>
<comment type="subunit">
    <text evidence="6">Interacts with set-6.</text>
</comment>
<comment type="subcellular location">
    <subcellularLocation>
        <location evidence="6">Nucleus</location>
    </subcellularLocation>
    <subcellularLocation>
        <location evidence="6">Chromosome</location>
    </subcellularLocation>
</comment>
<comment type="tissue specificity">
    <text evidence="6">Broadly expressed in the nervous system, including head, body and tail neurons.</text>
</comment>
<comment type="developmental stage">
    <text evidence="6">Expression increases with age.</text>
</comment>
<comment type="disruption phenotype">
    <text evidence="6">RNAi-mediated knockdown prevents age-related decline in the expression of bas-1, a serotonin (5-HT) and dopamine synthesizing enzyme (DOPA decarboxylase) (PubMed:32103178). RNAi-mediated knockdown improves behavioral performance in pharyngeal pumping in aged worms (PubMed:32103178).</text>
</comment>
<comment type="similarity">
    <text evidence="7">Belongs to the WAL family.</text>
</comment>
<feature type="chain" id="PRO_0000452176" description="Bromodomain adjacent to zinc finger domain protein 2">
    <location>
        <begin position="1"/>
        <end position="1390"/>
    </location>
</feature>
<feature type="domain" description="MBD" evidence="4">
    <location>
        <begin position="323"/>
        <end position="395"/>
    </location>
</feature>
<feature type="domain" description="DDT" evidence="2">
    <location>
        <begin position="524"/>
        <end position="588"/>
    </location>
</feature>
<feature type="domain" description="Bromo" evidence="1">
    <location>
        <begin position="1273"/>
        <end position="1377"/>
    </location>
</feature>
<feature type="zinc finger region" description="PHD-type" evidence="3">
    <location>
        <begin position="1100"/>
        <end position="1149"/>
    </location>
</feature>
<feature type="region of interest" description="Disordered" evidence="5">
    <location>
        <begin position="30"/>
        <end position="67"/>
    </location>
</feature>
<feature type="region of interest" description="Disordered" evidence="5">
    <location>
        <begin position="178"/>
        <end position="215"/>
    </location>
</feature>
<feature type="region of interest" description="Disordered" evidence="5">
    <location>
        <begin position="235"/>
        <end position="269"/>
    </location>
</feature>
<feature type="region of interest" description="Disordered" evidence="5">
    <location>
        <begin position="705"/>
        <end position="729"/>
    </location>
</feature>
<feature type="region of interest" description="Disordered" evidence="5">
    <location>
        <begin position="1218"/>
        <end position="1241"/>
    </location>
</feature>
<feature type="compositionally biased region" description="Polar residues" evidence="5">
    <location>
        <begin position="35"/>
        <end position="45"/>
    </location>
</feature>
<feature type="compositionally biased region" description="Low complexity" evidence="5">
    <location>
        <begin position="46"/>
        <end position="63"/>
    </location>
</feature>
<feature type="compositionally biased region" description="Low complexity" evidence="5">
    <location>
        <begin position="186"/>
        <end position="215"/>
    </location>
</feature>
<feature type="compositionally biased region" description="Basic and acidic residues" evidence="5">
    <location>
        <begin position="243"/>
        <end position="269"/>
    </location>
</feature>
<feature type="compositionally biased region" description="Basic and acidic residues" evidence="5">
    <location>
        <begin position="705"/>
        <end position="724"/>
    </location>
</feature>
<gene>
    <name evidence="9" type="primary">baz-2</name>
    <name evidence="9" type="synonym">flt-1</name>
    <name evidence="9" type="ORF">ZK783.4</name>
</gene>
<accession>Q23590</accession>
<organism evidence="8">
    <name type="scientific">Caenorhabditis elegans</name>
    <dbReference type="NCBI Taxonomy" id="6239"/>
    <lineage>
        <taxon>Eukaryota</taxon>
        <taxon>Metazoa</taxon>
        <taxon>Ecdysozoa</taxon>
        <taxon>Nematoda</taxon>
        <taxon>Chromadorea</taxon>
        <taxon>Rhabditida</taxon>
        <taxon>Rhabditina</taxon>
        <taxon>Rhabditomorpha</taxon>
        <taxon>Rhabditoidea</taxon>
        <taxon>Rhabditidae</taxon>
        <taxon>Peloderinae</taxon>
        <taxon>Caenorhabditis</taxon>
    </lineage>
</organism>
<evidence type="ECO:0000255" key="1">
    <source>
        <dbReference type="PROSITE-ProRule" id="PRU00035"/>
    </source>
</evidence>
<evidence type="ECO:0000255" key="2">
    <source>
        <dbReference type="PROSITE-ProRule" id="PRU00063"/>
    </source>
</evidence>
<evidence type="ECO:0000255" key="3">
    <source>
        <dbReference type="PROSITE-ProRule" id="PRU00146"/>
    </source>
</evidence>
<evidence type="ECO:0000255" key="4">
    <source>
        <dbReference type="PROSITE-ProRule" id="PRU00338"/>
    </source>
</evidence>
<evidence type="ECO:0000256" key="5">
    <source>
        <dbReference type="SAM" id="MobiDB-lite"/>
    </source>
</evidence>
<evidence type="ECO:0000269" key="6">
    <source>
    </source>
</evidence>
<evidence type="ECO:0000305" key="7"/>
<evidence type="ECO:0000312" key="8">
    <source>
        <dbReference type="Proteomes" id="UP000001940"/>
    </source>
</evidence>
<evidence type="ECO:0000312" key="9">
    <source>
        <dbReference type="WormBase" id="ZK783.4"/>
    </source>
</evidence>
<sequence length="1390" mass="156593">MSDNSSNQFLLLLAAAQQQQQQQLLQQQLAKIQKATASSPSKSTNGTSASTSAVPSTSGTSSSQNEAAQLQNLAKMQQIQQLAQFGALMAAQKKQQEKAAADKAKEKEKEKQKAAAAAAAAAAKASASTSSASAIPGLSPEMLAAWQQAIQMQALQQMMMTPQKSQMEEAIKKMMDMAKKKPAGVASTSSASTSSSTPSTSSASITSSNNNAANNAASNMMNNVMWQLVAAQMQQKQQQQQKDTQKKADQAKKAKELAKQQQKEQDVKNKQQEEILKFLMAQHQLNHQKKHEKKQADAAALAAKVLAAHRAALESDSPEEGKKTNEAMLRLPLQLGWRRQTCVRSIASAGVKGDVSYFAPCGKKLSTYSEVVRYLTKNSIHYITRDNFLFNTKLVIGEFIVPKQTEADETQQEREFAMFTEDDINKELTRLNVLKFVPKIQASTSNGVHEDDIKMSKIEEPDEPLDPSELNDEFTEELVHSQIMSNGVDECKIREREADDLLVNINDVRHLPDFSRIGNQCLSSQGFADALMVHEFVQNFGHVLGIDLEIAPKLESLCAGLDGDANHAEQTLQLTRQLLRLALEFPGMGNEKRFGQGGGEMGLDRENFSEVMRLFLIDKGKRGEELSQPLLTCNFLSISPEQKASILAFLCDELVCSRNVVTEIDKNLDEISRLKGEKWMREGKARALRSARSKKKNDEKVVVVKEEQNHESDSEPPTRPDTPKKATVAPPTVVSVSPVSAAQQQQRKFTPGLGQCEVLTEQEESMSLQQMDSLIGDLHQEAQNINQKIHDTGLKIRSFPFGTDRFHRNYWMLAHTDKVIIESLATTSVNNPACNANEYASKDPPTLEQRVPGACETIDLDVIACVEDLVDDVVLLRAKADKKTRKRYRRIENHMKRGWWTMQNRDCVESLRSCMLSRGIRERALHRLLTKPWFLNELKFGTITIEPVGEKSDLELVRRQGWTRLNTAIDKLQCHLKMSDVSKPLPSITPFETQKPIVVPPTMALAQIVKDDMAWKVIDEEVDGQELDETIIRQKIIETADMVQPKFWRPKFQKLEDQDTCQLFEDWKSYVSTEAQTTSQLMVALQTLEGMIMWERSSREALCQICKSMDGDEMLVCDGCESGCHMECFRPRMTKVPEGDWFCQRCREEKSGRPMCMFCSRETGNLHQCQRCAYHVHQECSQDGPKEAINPETFICGHCQEMKQMRFVKRLILRSESEERELEDDNHAENGENTKNGHMNGMNGAIAIGVHNQQNGVKGNLKRKLEVPSIGGLPKNMNKELCQLMLDELVVQANALPFLEPVNPKLVPGYKMIISKPMDLKTIRQKNEKLIYETPEDFAEDIELMFANCRQFNIDHSEIGRAGISLHKFFQKRWKQLKYNFTKRLRRLHR</sequence>